<accession>A0A023PYJ0</accession>
<protein>
    <recommendedName>
        <fullName evidence="2">Putative uncharacterized membrane protein YML009C-A</fullName>
    </recommendedName>
</protein>
<reference key="1">
    <citation type="journal article" date="1997" name="Nature">
        <title>The nucleotide sequence of Saccharomyces cerevisiae chromosome XIII.</title>
        <authorList>
            <person name="Bowman S."/>
            <person name="Churcher C.M."/>
            <person name="Badcock K."/>
            <person name="Brown D."/>
            <person name="Chillingworth T."/>
            <person name="Connor R."/>
            <person name="Dedman K."/>
            <person name="Devlin K."/>
            <person name="Gentles S."/>
            <person name="Hamlin N."/>
            <person name="Hunt S."/>
            <person name="Jagels K."/>
            <person name="Lye G."/>
            <person name="Moule S."/>
            <person name="Odell C."/>
            <person name="Pearson D."/>
            <person name="Rajandream M.A."/>
            <person name="Rice P."/>
            <person name="Skelton J."/>
            <person name="Walsh S.V."/>
            <person name="Whitehead S."/>
            <person name="Barrell B.G."/>
        </authorList>
    </citation>
    <scope>NUCLEOTIDE SEQUENCE [LARGE SCALE GENOMIC DNA]</scope>
    <source>
        <strain>ATCC 204508 / S288c</strain>
    </source>
</reference>
<reference key="2">
    <citation type="journal article" date="2014" name="G3 (Bethesda)">
        <title>The reference genome sequence of Saccharomyces cerevisiae: Then and now.</title>
        <authorList>
            <person name="Engel S.R."/>
            <person name="Dietrich F.S."/>
            <person name="Fisk D.G."/>
            <person name="Binkley G."/>
            <person name="Balakrishnan R."/>
            <person name="Costanzo M.C."/>
            <person name="Dwight S.S."/>
            <person name="Hitz B.C."/>
            <person name="Karra K."/>
            <person name="Nash R.S."/>
            <person name="Weng S."/>
            <person name="Wong E.D."/>
            <person name="Lloyd P."/>
            <person name="Skrzypek M.S."/>
            <person name="Miyasato S.R."/>
            <person name="Simison M."/>
            <person name="Cherry J.M."/>
        </authorList>
    </citation>
    <scope>GENOME REANNOTATION</scope>
    <source>
        <strain>ATCC 204508 / S288c</strain>
    </source>
</reference>
<proteinExistence type="uncertain"/>
<organism>
    <name type="scientific">Saccharomyces cerevisiae (strain ATCC 204508 / S288c)</name>
    <name type="common">Baker's yeast</name>
    <dbReference type="NCBI Taxonomy" id="559292"/>
    <lineage>
        <taxon>Eukaryota</taxon>
        <taxon>Fungi</taxon>
        <taxon>Dikarya</taxon>
        <taxon>Ascomycota</taxon>
        <taxon>Saccharomycotina</taxon>
        <taxon>Saccharomycetes</taxon>
        <taxon>Saccharomycetales</taxon>
        <taxon>Saccharomycetaceae</taxon>
        <taxon>Saccharomyces</taxon>
    </lineage>
</organism>
<feature type="chain" id="PRO_0000431058" description="Putative uncharacterized membrane protein YML009C-A">
    <location>
        <begin position="1"/>
        <end position="108"/>
    </location>
</feature>
<feature type="transmembrane region" description="Helical" evidence="1">
    <location>
        <begin position="25"/>
        <end position="45"/>
    </location>
</feature>
<gene>
    <name evidence="4" type="ordered locus">YML009C-A</name>
</gene>
<evidence type="ECO:0000255" key="1"/>
<evidence type="ECO:0000305" key="2"/>
<evidence type="ECO:0000305" key="3">
    <source>
    </source>
</evidence>
<evidence type="ECO:0000312" key="4">
    <source>
        <dbReference type="SGD" id="S000004469"/>
    </source>
</evidence>
<keyword id="KW-0472">Membrane</keyword>
<keyword id="KW-0812">Transmembrane</keyword>
<keyword id="KW-1133">Transmembrane helix</keyword>
<sequence>MKKKDRDSVFHRNIEIFITILINVVILKSFLLISSWVILVLLLVINDLPMYCYHHSLTYFLGCSKQTYFHRLGYPMQKLRHLLYFYYCYFLPRWKPRRRLTYHRYHPK</sequence>
<dbReference type="EMBL" id="KJ412285">
    <property type="protein sequence ID" value="AHX39328.1"/>
    <property type="molecule type" value="Genomic_DNA"/>
</dbReference>
<dbReference type="PIR" id="S69873">
    <property type="entry name" value="S69873"/>
</dbReference>
<dbReference type="SMR" id="A0A023PYJ0"/>
<dbReference type="DIP" id="DIP-62125N"/>
<dbReference type="STRING" id="4932.YML009C-A"/>
<dbReference type="PaxDb" id="4932-YML009C-A"/>
<dbReference type="EnsemblFungi" id="YML009C-A_mRNA">
    <property type="protein sequence ID" value="YML009C-A"/>
    <property type="gene ID" value="YML009C-A"/>
</dbReference>
<dbReference type="AGR" id="SGD:S000004469"/>
<dbReference type="SGD" id="S000004469">
    <property type="gene designation" value="YML009C-A"/>
</dbReference>
<dbReference type="HOGENOM" id="CLU_2199049_0_0_1"/>
<dbReference type="GO" id="GO:0016020">
    <property type="term" value="C:membrane"/>
    <property type="evidence" value="ECO:0007669"/>
    <property type="project" value="UniProtKB-SubCell"/>
</dbReference>
<name>YM09A_YEAST</name>
<comment type="subcellular location">
    <subcellularLocation>
        <location evidence="1">Membrane</location>
        <topology evidence="1">Single-pass membrane protein</topology>
    </subcellularLocation>
</comment>
<comment type="miscellaneous">
    <text evidence="2">Partially overlaps SPT5 and YML009W-B.</text>
</comment>
<comment type="caution">
    <text evidence="3">Product of a dubious gene prediction unlikely to encode a functional protein. Because of that it is not part of the S.cerevisiae S288c complete/reference proteome set.</text>
</comment>